<name>Y1807_NEIMF</name>
<dbReference type="EMBL" id="AM421808">
    <property type="protein sequence ID" value="CAM10978.1"/>
    <property type="molecule type" value="Genomic_DNA"/>
</dbReference>
<dbReference type="RefSeq" id="WP_002218732.1">
    <property type="nucleotide sequence ID" value="NC_008767.1"/>
</dbReference>
<dbReference type="SMR" id="A1KVS3"/>
<dbReference type="KEGG" id="nmc:NMC1807"/>
<dbReference type="HOGENOM" id="CLU_135650_0_2_4"/>
<dbReference type="Proteomes" id="UP000002286">
    <property type="component" value="Chromosome"/>
</dbReference>
<dbReference type="CDD" id="cd10456">
    <property type="entry name" value="GIY-YIG_UPF0213"/>
    <property type="match status" value="1"/>
</dbReference>
<dbReference type="Gene3D" id="3.40.1440.10">
    <property type="entry name" value="GIY-YIG endonuclease"/>
    <property type="match status" value="1"/>
</dbReference>
<dbReference type="InterPro" id="IPR000305">
    <property type="entry name" value="GIY-YIG_endonuc"/>
</dbReference>
<dbReference type="InterPro" id="IPR035901">
    <property type="entry name" value="GIY-YIG_endonuc_sf"/>
</dbReference>
<dbReference type="InterPro" id="IPR050190">
    <property type="entry name" value="UPF0213_domain"/>
</dbReference>
<dbReference type="PANTHER" id="PTHR34477">
    <property type="entry name" value="UPF0213 PROTEIN YHBQ"/>
    <property type="match status" value="1"/>
</dbReference>
<dbReference type="PANTHER" id="PTHR34477:SF1">
    <property type="entry name" value="UPF0213 PROTEIN YHBQ"/>
    <property type="match status" value="1"/>
</dbReference>
<dbReference type="Pfam" id="PF01541">
    <property type="entry name" value="GIY-YIG"/>
    <property type="match status" value="1"/>
</dbReference>
<dbReference type="SUPFAM" id="SSF82771">
    <property type="entry name" value="GIY-YIG endonuclease"/>
    <property type="match status" value="1"/>
</dbReference>
<dbReference type="PROSITE" id="PS50164">
    <property type="entry name" value="GIY_YIG"/>
    <property type="match status" value="1"/>
</dbReference>
<reference key="1">
    <citation type="journal article" date="2007" name="PLoS Genet.">
        <title>Meningococcal genetic variation mechanisms viewed through comparative analysis of serogroup C strain FAM18.</title>
        <authorList>
            <person name="Bentley S.D."/>
            <person name="Vernikos G.S."/>
            <person name="Snyder L.A.S."/>
            <person name="Churcher C."/>
            <person name="Arrowsmith C."/>
            <person name="Chillingworth T."/>
            <person name="Cronin A."/>
            <person name="Davis P.H."/>
            <person name="Holroyd N.E."/>
            <person name="Jagels K."/>
            <person name="Maddison M."/>
            <person name="Moule S."/>
            <person name="Rabbinowitsch E."/>
            <person name="Sharp S."/>
            <person name="Unwin L."/>
            <person name="Whitehead S."/>
            <person name="Quail M.A."/>
            <person name="Achtman M."/>
            <person name="Barrell B.G."/>
            <person name="Saunders N.J."/>
            <person name="Parkhill J."/>
        </authorList>
    </citation>
    <scope>NUCLEOTIDE SEQUENCE [LARGE SCALE GENOMIC DNA]</scope>
    <source>
        <strain>ATCC 700532 / DSM 15464 / FAM18</strain>
    </source>
</reference>
<evidence type="ECO:0000255" key="1">
    <source>
        <dbReference type="PROSITE-ProRule" id="PRU00977"/>
    </source>
</evidence>
<evidence type="ECO:0000305" key="2"/>
<organism>
    <name type="scientific">Neisseria meningitidis serogroup C / serotype 2a (strain ATCC 700532 / DSM 15464 / FAM18)</name>
    <dbReference type="NCBI Taxonomy" id="272831"/>
    <lineage>
        <taxon>Bacteria</taxon>
        <taxon>Pseudomonadati</taxon>
        <taxon>Pseudomonadota</taxon>
        <taxon>Betaproteobacteria</taxon>
        <taxon>Neisseriales</taxon>
        <taxon>Neisseriaceae</taxon>
        <taxon>Neisseria</taxon>
    </lineage>
</organism>
<comment type="similarity">
    <text evidence="2">Belongs to the UPF0213 family.</text>
</comment>
<protein>
    <recommendedName>
        <fullName>UPF0213 protein NMC1807</fullName>
    </recommendedName>
</protein>
<feature type="chain" id="PRO_1000063676" description="UPF0213 protein NMC1807">
    <location>
        <begin position="1"/>
        <end position="91"/>
    </location>
</feature>
<feature type="domain" description="GIY-YIG" evidence="1">
    <location>
        <begin position="4"/>
        <end position="83"/>
    </location>
</feature>
<gene>
    <name type="ordered locus">NMC1807</name>
</gene>
<accession>A1KVS3</accession>
<sequence>MNASNWSVYLILCENSAFYCGISPNPQQRLAAHTTGKGAKYTRVFKPVAMRIVAGGMDKGTALRQEIAVKKLTAAQKRQLWEQAEKMPSET</sequence>
<proteinExistence type="inferred from homology"/>